<comment type="similarity">
    <text evidence="1">Belongs to the bacterial ribosomal protein bS21 family.</text>
</comment>
<sequence>MILVNVHAGNCDNTLKNFKKRLQRELYFRKMKEQRYYETPSAKRVRKAQEAARRQRKFARKKMFDE</sequence>
<evidence type="ECO:0000255" key="1">
    <source>
        <dbReference type="HAMAP-Rule" id="MF_00358"/>
    </source>
</evidence>
<evidence type="ECO:0000305" key="2"/>
<organism>
    <name type="scientific">Rickettsia felis (strain ATCC VR-1525 / URRWXCal2)</name>
    <name type="common">Rickettsia azadi</name>
    <dbReference type="NCBI Taxonomy" id="315456"/>
    <lineage>
        <taxon>Bacteria</taxon>
        <taxon>Pseudomonadati</taxon>
        <taxon>Pseudomonadota</taxon>
        <taxon>Alphaproteobacteria</taxon>
        <taxon>Rickettsiales</taxon>
        <taxon>Rickettsiaceae</taxon>
        <taxon>Rickettsieae</taxon>
        <taxon>Rickettsia</taxon>
        <taxon>spotted fever group</taxon>
    </lineage>
</organism>
<name>RS21_RICFE</name>
<accession>Q4UMD5</accession>
<keyword id="KW-0687">Ribonucleoprotein</keyword>
<keyword id="KW-0689">Ribosomal protein</keyword>
<feature type="chain" id="PRO_0000266755" description="Small ribosomal subunit protein bS21">
    <location>
        <begin position="1"/>
        <end position="66"/>
    </location>
</feature>
<reference key="1">
    <citation type="journal article" date="2005" name="PLoS Biol.">
        <title>The genome sequence of Rickettsia felis identifies the first putative conjugative plasmid in an obligate intracellular parasite.</title>
        <authorList>
            <person name="Ogata H."/>
            <person name="Renesto P."/>
            <person name="Audic S."/>
            <person name="Robert C."/>
            <person name="Blanc G."/>
            <person name="Fournier P.-E."/>
            <person name="Parinello H."/>
            <person name="Claverie J.-M."/>
            <person name="Raoult D."/>
        </authorList>
    </citation>
    <scope>NUCLEOTIDE SEQUENCE [LARGE SCALE GENOMIC DNA]</scope>
    <source>
        <strain>ATCC VR-1525 / URRWXCal2</strain>
    </source>
</reference>
<dbReference type="EMBL" id="CP000053">
    <property type="protein sequence ID" value="AAY61277.1"/>
    <property type="molecule type" value="Genomic_DNA"/>
</dbReference>
<dbReference type="SMR" id="Q4UMD5"/>
<dbReference type="STRING" id="315456.RF_0426"/>
<dbReference type="KEGG" id="rfe:RF_0426"/>
<dbReference type="eggNOG" id="COG0828">
    <property type="taxonomic scope" value="Bacteria"/>
</dbReference>
<dbReference type="HOGENOM" id="CLU_159258_0_2_5"/>
<dbReference type="OrthoDB" id="9811907at2"/>
<dbReference type="Proteomes" id="UP000008548">
    <property type="component" value="Chromosome"/>
</dbReference>
<dbReference type="GO" id="GO:1990904">
    <property type="term" value="C:ribonucleoprotein complex"/>
    <property type="evidence" value="ECO:0007669"/>
    <property type="project" value="UniProtKB-KW"/>
</dbReference>
<dbReference type="GO" id="GO:0005840">
    <property type="term" value="C:ribosome"/>
    <property type="evidence" value="ECO:0007669"/>
    <property type="project" value="UniProtKB-KW"/>
</dbReference>
<dbReference type="GO" id="GO:0003735">
    <property type="term" value="F:structural constituent of ribosome"/>
    <property type="evidence" value="ECO:0007669"/>
    <property type="project" value="InterPro"/>
</dbReference>
<dbReference type="GO" id="GO:0006412">
    <property type="term" value="P:translation"/>
    <property type="evidence" value="ECO:0007669"/>
    <property type="project" value="UniProtKB-UniRule"/>
</dbReference>
<dbReference type="Gene3D" id="1.20.5.1150">
    <property type="entry name" value="Ribosomal protein S8"/>
    <property type="match status" value="1"/>
</dbReference>
<dbReference type="HAMAP" id="MF_00358">
    <property type="entry name" value="Ribosomal_bS21"/>
    <property type="match status" value="1"/>
</dbReference>
<dbReference type="InterPro" id="IPR001911">
    <property type="entry name" value="Ribosomal_bS21"/>
</dbReference>
<dbReference type="InterPro" id="IPR038380">
    <property type="entry name" value="Ribosomal_bS21_sf"/>
</dbReference>
<dbReference type="NCBIfam" id="TIGR00030">
    <property type="entry name" value="S21p"/>
    <property type="match status" value="1"/>
</dbReference>
<dbReference type="Pfam" id="PF01165">
    <property type="entry name" value="Ribosomal_S21"/>
    <property type="match status" value="1"/>
</dbReference>
<proteinExistence type="inferred from homology"/>
<protein>
    <recommendedName>
        <fullName evidence="1">Small ribosomal subunit protein bS21</fullName>
    </recommendedName>
    <alternativeName>
        <fullName evidence="2">30S ribosomal protein S21</fullName>
    </alternativeName>
</protein>
<gene>
    <name evidence="1" type="primary">rpsU</name>
    <name type="ordered locus">RF_0426</name>
</gene>